<protein>
    <recommendedName>
        <fullName>Isocitrate dehydrogenase [NADP] cytoplasmic</fullName>
        <shortName>IDH</shortName>
        <shortName>IDH1</shortName>
        <ecNumber evidence="3">1.1.1.42</ecNumber>
    </recommendedName>
    <alternativeName>
        <fullName>Cytosolic NADP-isocitrate dehydrogenase</fullName>
    </alternativeName>
    <alternativeName>
        <fullName>IDPc</fullName>
    </alternativeName>
    <alternativeName>
        <fullName>NADP(+)-specific ICDH</fullName>
    </alternativeName>
    <alternativeName>
        <fullName>Oxalosuccinate decarboxylase</fullName>
    </alternativeName>
</protein>
<evidence type="ECO:0000250" key="1"/>
<evidence type="ECO:0000250" key="2">
    <source>
        <dbReference type="UniProtKB" id="O75874"/>
    </source>
</evidence>
<evidence type="ECO:0000250" key="3">
    <source>
        <dbReference type="UniProtKB" id="O88844"/>
    </source>
</evidence>
<evidence type="ECO:0000250" key="4">
    <source>
        <dbReference type="UniProtKB" id="P41562"/>
    </source>
</evidence>
<evidence type="ECO:0000250" key="5">
    <source>
        <dbReference type="UniProtKB" id="Q9XSG3"/>
    </source>
</evidence>
<evidence type="ECO:0000305" key="6"/>
<sequence length="414" mass="46694">MSKKIHGGSVVEMQGDEMTRIIWELIKEKLILPYVELDLHSYDLGIENRDATNDQVTKDAAEAIKKYNVGVKCATITPDEKRVEEFKLKQMWKSPNGTIRNILGGTVFREAIICKNIPRLVTGWVKPIIIGRHAYGDQYRATDFVVPGPGKVEITYTPKDGSQKVTYLVHSFEEGGGVAMGMYNQDKSIEDFAHSSFQMALSKGWPLYLSTKNTILKKYDGRFKDIFQEIYDKQYKSQFEAQKIWYEHRLIDDMVAQAMKSEGGFIWACKNYDGDVQSDSVAQGYGSLGMMTSVLICPDGKTVEAEAAHGTVTRHYRMHQKGQETSTNPIASIFAWSRGLAHRARLDNNTELSFFAKALEEVCIETIEAGFMTKDLAACIKGLPNVQRSDYLNTFEFMDKLGENLKAKLAQAKL</sequence>
<dbReference type="EC" id="1.1.1.42" evidence="3"/>
<dbReference type="EMBL" id="AF048832">
    <property type="protein sequence ID" value="AAD02925.1"/>
    <property type="molecule type" value="Genomic_DNA"/>
</dbReference>
<dbReference type="RefSeq" id="XP_005361517.1">
    <property type="nucleotide sequence ID" value="XM_005361460.2"/>
</dbReference>
<dbReference type="SMR" id="Q9Z2K8"/>
<dbReference type="GeneID" id="101996438"/>
<dbReference type="CTD" id="3417"/>
<dbReference type="OrthoDB" id="248923at2759"/>
<dbReference type="Proteomes" id="UP000694915">
    <property type="component" value="Linkage group LG4"/>
</dbReference>
<dbReference type="GO" id="GO:0005829">
    <property type="term" value="C:cytosol"/>
    <property type="evidence" value="ECO:0007669"/>
    <property type="project" value="UniProtKB-SubCell"/>
</dbReference>
<dbReference type="GO" id="GO:0005739">
    <property type="term" value="C:mitochondrion"/>
    <property type="evidence" value="ECO:0007669"/>
    <property type="project" value="Ensembl"/>
</dbReference>
<dbReference type="GO" id="GO:0005782">
    <property type="term" value="C:peroxisomal matrix"/>
    <property type="evidence" value="ECO:0007669"/>
    <property type="project" value="Ensembl"/>
</dbReference>
<dbReference type="GO" id="GO:0004450">
    <property type="term" value="F:isocitrate dehydrogenase (NADP+) activity"/>
    <property type="evidence" value="ECO:0000250"/>
    <property type="project" value="UniProtKB"/>
</dbReference>
<dbReference type="GO" id="GO:0000287">
    <property type="term" value="F:magnesium ion binding"/>
    <property type="evidence" value="ECO:0000250"/>
    <property type="project" value="UniProtKB"/>
</dbReference>
<dbReference type="GO" id="GO:0051287">
    <property type="term" value="F:NAD binding"/>
    <property type="evidence" value="ECO:0007669"/>
    <property type="project" value="InterPro"/>
</dbReference>
<dbReference type="GO" id="GO:0042803">
    <property type="term" value="F:protein homodimerization activity"/>
    <property type="evidence" value="ECO:0007669"/>
    <property type="project" value="Ensembl"/>
</dbReference>
<dbReference type="GO" id="GO:0006103">
    <property type="term" value="P:2-oxoglutarate metabolic process"/>
    <property type="evidence" value="ECO:0000250"/>
    <property type="project" value="UniProtKB"/>
</dbReference>
<dbReference type="GO" id="GO:0006749">
    <property type="term" value="P:glutathione metabolic process"/>
    <property type="evidence" value="ECO:0007669"/>
    <property type="project" value="Ensembl"/>
</dbReference>
<dbReference type="GO" id="GO:0006097">
    <property type="term" value="P:glyoxylate cycle"/>
    <property type="evidence" value="ECO:0007669"/>
    <property type="project" value="UniProtKB-KW"/>
</dbReference>
<dbReference type="GO" id="GO:0006102">
    <property type="term" value="P:isocitrate metabolic process"/>
    <property type="evidence" value="ECO:0000250"/>
    <property type="project" value="UniProtKB"/>
</dbReference>
<dbReference type="GO" id="GO:0006740">
    <property type="term" value="P:NADPH regeneration"/>
    <property type="evidence" value="ECO:0007669"/>
    <property type="project" value="Ensembl"/>
</dbReference>
<dbReference type="GO" id="GO:0071071">
    <property type="term" value="P:regulation of phospholipid biosynthetic process"/>
    <property type="evidence" value="ECO:0007669"/>
    <property type="project" value="Ensembl"/>
</dbReference>
<dbReference type="GO" id="GO:0060696">
    <property type="term" value="P:regulation of phospholipid catabolic process"/>
    <property type="evidence" value="ECO:0007669"/>
    <property type="project" value="Ensembl"/>
</dbReference>
<dbReference type="GO" id="GO:0006979">
    <property type="term" value="P:response to oxidative stress"/>
    <property type="evidence" value="ECO:0007669"/>
    <property type="project" value="Ensembl"/>
</dbReference>
<dbReference type="GO" id="GO:0006099">
    <property type="term" value="P:tricarboxylic acid cycle"/>
    <property type="evidence" value="ECO:0007669"/>
    <property type="project" value="UniProtKB-KW"/>
</dbReference>
<dbReference type="FunFam" id="3.40.718.10:FF:000002">
    <property type="entry name" value="Isocitrate dehydrogenase [NADP]"/>
    <property type="match status" value="1"/>
</dbReference>
<dbReference type="Gene3D" id="3.40.718.10">
    <property type="entry name" value="Isopropylmalate Dehydrogenase"/>
    <property type="match status" value="1"/>
</dbReference>
<dbReference type="InterPro" id="IPR019818">
    <property type="entry name" value="IsoCit/isopropylmalate_DH_CS"/>
</dbReference>
<dbReference type="InterPro" id="IPR004790">
    <property type="entry name" value="Isocitrate_DH_NADP"/>
</dbReference>
<dbReference type="InterPro" id="IPR024084">
    <property type="entry name" value="IsoPropMal-DH-like_dom"/>
</dbReference>
<dbReference type="NCBIfam" id="TIGR00127">
    <property type="entry name" value="nadp_idh_euk"/>
    <property type="match status" value="1"/>
</dbReference>
<dbReference type="NCBIfam" id="NF006156">
    <property type="entry name" value="PRK08299.1"/>
    <property type="match status" value="1"/>
</dbReference>
<dbReference type="PANTHER" id="PTHR11822:SF21">
    <property type="entry name" value="ISOCITRATE DEHYDROGENASE [NADP], MITOCHONDRIAL"/>
    <property type="match status" value="1"/>
</dbReference>
<dbReference type="PANTHER" id="PTHR11822">
    <property type="entry name" value="NADP-SPECIFIC ISOCITRATE DEHYDROGENASE"/>
    <property type="match status" value="1"/>
</dbReference>
<dbReference type="Pfam" id="PF00180">
    <property type="entry name" value="Iso_dh"/>
    <property type="match status" value="1"/>
</dbReference>
<dbReference type="PIRSF" id="PIRSF000108">
    <property type="entry name" value="IDH_NADP"/>
    <property type="match status" value="1"/>
</dbReference>
<dbReference type="SMART" id="SM01329">
    <property type="entry name" value="Iso_dh"/>
    <property type="match status" value="1"/>
</dbReference>
<dbReference type="SUPFAM" id="SSF53659">
    <property type="entry name" value="Isocitrate/Isopropylmalate dehydrogenase-like"/>
    <property type="match status" value="1"/>
</dbReference>
<dbReference type="PROSITE" id="PS00470">
    <property type="entry name" value="IDH_IMDH"/>
    <property type="match status" value="1"/>
</dbReference>
<accession>Q9Z2K8</accession>
<comment type="function">
    <text evidence="2 5">Catalyzes the NADP(+)-dependent oxidative decarboxylation of isocitrate (D-threo-isocitrate) to 2-ketoglutarate (2-oxoglutarate), which is required by other enzymes such as the phytanoyl-CoA dioxygenase (By similarity). Plays a critical role in the generation of NADPH, an important cofactor in many biosynthesis pathways (By similarity). May act as a corneal epithelial crystallin and may be involved in maintaining corneal epithelial transparency (By similarity).</text>
</comment>
<comment type="catalytic activity">
    <reaction evidence="3">
        <text>D-threo-isocitrate + NADP(+) = 2-oxoglutarate + CO2 + NADPH</text>
        <dbReference type="Rhea" id="RHEA:19629"/>
        <dbReference type="ChEBI" id="CHEBI:15562"/>
        <dbReference type="ChEBI" id="CHEBI:16526"/>
        <dbReference type="ChEBI" id="CHEBI:16810"/>
        <dbReference type="ChEBI" id="CHEBI:57783"/>
        <dbReference type="ChEBI" id="CHEBI:58349"/>
        <dbReference type="EC" id="1.1.1.42"/>
    </reaction>
    <physiologicalReaction direction="left-to-right" evidence="3">
        <dbReference type="Rhea" id="RHEA:19630"/>
    </physiologicalReaction>
</comment>
<comment type="cofactor">
    <cofactor evidence="3">
        <name>Mg(2+)</name>
        <dbReference type="ChEBI" id="CHEBI:18420"/>
    </cofactor>
    <cofactor evidence="3">
        <name>Mn(2+)</name>
        <dbReference type="ChEBI" id="CHEBI:29035"/>
    </cofactor>
    <text evidence="3">Binds 1 Mg(2+) or Mn(2+) ion per subunit.</text>
</comment>
<comment type="subunit">
    <text evidence="3">Homodimer.</text>
</comment>
<comment type="subcellular location">
    <subcellularLocation>
        <location evidence="4">Cytoplasm</location>
        <location evidence="4">Cytosol</location>
    </subcellularLocation>
</comment>
<comment type="PTM">
    <text evidence="1">Acetylation at Lys-374 dramatically reduces catalytic activity.</text>
</comment>
<comment type="similarity">
    <text evidence="6">Belongs to the isocitrate and isopropylmalate dehydrogenases family.</text>
</comment>
<keyword id="KW-0007">Acetylation</keyword>
<keyword id="KW-0963">Cytoplasm</keyword>
<keyword id="KW-0329">Glyoxylate bypass</keyword>
<keyword id="KW-0460">Magnesium</keyword>
<keyword id="KW-0464">Manganese</keyword>
<keyword id="KW-0479">Metal-binding</keyword>
<keyword id="KW-0521">NADP</keyword>
<keyword id="KW-0560">Oxidoreductase</keyword>
<keyword id="KW-0597">Phosphoprotein</keyword>
<keyword id="KW-0816">Tricarboxylic acid cycle</keyword>
<reference key="1">
    <citation type="journal article" date="1998" name="Mol. Biol. Evol.">
        <title>Cytosolic isocitrate dehydrogenase in humans, mice, and voles and phylogenetic analysis of the enzyme family.</title>
        <authorList>
            <person name="Nekrutenko A."/>
            <person name="Hillis D.M."/>
            <person name="Patton J.C."/>
            <person name="Bradley R.D."/>
            <person name="Baker R.J."/>
        </authorList>
    </citation>
    <scope>NUCLEOTIDE SEQUENCE [GENOMIC DNA]</scope>
    <source>
        <tissue>Liver</tissue>
    </source>
</reference>
<feature type="initiator methionine" description="Removed" evidence="2">
    <location>
        <position position="1"/>
    </location>
</feature>
<feature type="chain" id="PRO_0000083577" description="Isocitrate dehydrogenase [NADP] cytoplasmic">
    <location>
        <begin position="2"/>
        <end position="414"/>
    </location>
</feature>
<feature type="binding site" evidence="2">
    <location>
        <begin position="75"/>
        <end position="77"/>
    </location>
    <ligand>
        <name>NADP(+)</name>
        <dbReference type="ChEBI" id="CHEBI:58349"/>
    </ligand>
</feature>
<feature type="binding site" description="in other chain" evidence="2">
    <location>
        <position position="77"/>
    </location>
    <ligand>
        <name>substrate</name>
        <note>ligand shared between two neighboring subunits</note>
    </ligand>
</feature>
<feature type="binding site" evidence="2">
    <location>
        <position position="82"/>
    </location>
    <ligand>
        <name>NADP(+)</name>
        <dbReference type="ChEBI" id="CHEBI:58349"/>
    </ligand>
</feature>
<feature type="binding site" description="in other chain" evidence="2">
    <location>
        <begin position="94"/>
        <end position="100"/>
    </location>
    <ligand>
        <name>substrate</name>
        <note>ligand shared between two neighboring subunits</note>
    </ligand>
</feature>
<feature type="binding site" description="in other chain" evidence="2">
    <location>
        <position position="109"/>
    </location>
    <ligand>
        <name>substrate</name>
        <note>ligand shared between two neighboring subunits</note>
    </ligand>
</feature>
<feature type="binding site" description="in other chain" evidence="2">
    <location>
        <position position="132"/>
    </location>
    <ligand>
        <name>substrate</name>
        <note>ligand shared between two neighboring subunits</note>
    </ligand>
</feature>
<feature type="binding site" evidence="3">
    <location>
        <position position="212"/>
    </location>
    <ligand>
        <name>substrate</name>
        <note>ligand shared between two neighboring subunits</note>
    </ligand>
</feature>
<feature type="binding site" evidence="2">
    <location>
        <position position="252"/>
    </location>
    <ligand>
        <name>Mn(2+)</name>
        <dbReference type="ChEBI" id="CHEBI:29035"/>
        <note>ligand shared between two neighboring subunits</note>
    </ligand>
</feature>
<feature type="binding site" evidence="2">
    <location>
        <position position="260"/>
    </location>
    <ligand>
        <name>NADP(+)</name>
        <dbReference type="ChEBI" id="CHEBI:58349"/>
    </ligand>
</feature>
<feature type="binding site" description="in other chain" evidence="2">
    <location>
        <position position="275"/>
    </location>
    <ligand>
        <name>Mn(2+)</name>
        <dbReference type="ChEBI" id="CHEBI:29035"/>
        <note>ligand shared between two neighboring subunits</note>
    </ligand>
</feature>
<feature type="binding site" description="in other chain" evidence="2">
    <location>
        <position position="279"/>
    </location>
    <ligand>
        <name>Mn(2+)</name>
        <dbReference type="ChEBI" id="CHEBI:29035"/>
        <note>ligand shared between two neighboring subunits</note>
    </ligand>
</feature>
<feature type="binding site" evidence="2">
    <location>
        <begin position="310"/>
        <end position="315"/>
    </location>
    <ligand>
        <name>NADP(+)</name>
        <dbReference type="ChEBI" id="CHEBI:58349"/>
    </ligand>
</feature>
<feature type="binding site" evidence="2">
    <location>
        <position position="328"/>
    </location>
    <ligand>
        <name>NADP(+)</name>
        <dbReference type="ChEBI" id="CHEBI:58349"/>
    </ligand>
</feature>
<feature type="site" description="Critical for catalysis" evidence="1">
    <location>
        <position position="139"/>
    </location>
</feature>
<feature type="site" description="Critical for catalysis" evidence="1">
    <location>
        <position position="212"/>
    </location>
</feature>
<feature type="modified residue" description="N-acetylserine" evidence="2">
    <location>
        <position position="2"/>
    </location>
</feature>
<feature type="modified residue" description="Phosphotyrosine" evidence="2">
    <location>
        <position position="42"/>
    </location>
</feature>
<feature type="modified residue" description="N6-acetyllysine" evidence="3">
    <location>
        <position position="81"/>
    </location>
</feature>
<feature type="modified residue" description="N6-succinyllysine" evidence="3">
    <location>
        <position position="126"/>
    </location>
</feature>
<feature type="modified residue" description="N6-acetyllysine" evidence="3">
    <location>
        <position position="224"/>
    </location>
</feature>
<feature type="modified residue" description="N6-acetyllysine" evidence="3">
    <location>
        <position position="233"/>
    </location>
</feature>
<feature type="modified residue" description="N6-acetyllysine" evidence="3">
    <location>
        <position position="243"/>
    </location>
</feature>
<feature type="modified residue" description="N6-acetyllysine" evidence="2">
    <location>
        <position position="321"/>
    </location>
</feature>
<feature type="modified residue" description="Phosphoserine" evidence="3">
    <location>
        <position position="389"/>
    </location>
</feature>
<feature type="modified residue" description="N6-succinyllysine" evidence="3">
    <location>
        <position position="400"/>
    </location>
</feature>
<gene>
    <name type="primary">IDH1</name>
    <name type="synonym">IDP2</name>
</gene>
<name>IDHC_MICOH</name>
<organism>
    <name type="scientific">Microtus ochrogaster</name>
    <name type="common">Prairie vole</name>
    <dbReference type="NCBI Taxonomy" id="79684"/>
    <lineage>
        <taxon>Eukaryota</taxon>
        <taxon>Metazoa</taxon>
        <taxon>Chordata</taxon>
        <taxon>Craniata</taxon>
        <taxon>Vertebrata</taxon>
        <taxon>Euteleostomi</taxon>
        <taxon>Mammalia</taxon>
        <taxon>Eutheria</taxon>
        <taxon>Euarchontoglires</taxon>
        <taxon>Glires</taxon>
        <taxon>Rodentia</taxon>
        <taxon>Myomorpha</taxon>
        <taxon>Muroidea</taxon>
        <taxon>Cricetidae</taxon>
        <taxon>Arvicolinae</taxon>
        <taxon>Microtus</taxon>
    </lineage>
</organism>
<proteinExistence type="inferred from homology"/>